<feature type="chain" id="PRO_0000119326" description="Transcription initiation factor IIB">
    <location>
        <begin position="1"/>
        <end position="333"/>
    </location>
</feature>
<feature type="repeat" description="1">
    <location>
        <begin position="149"/>
        <end position="232"/>
    </location>
</feature>
<feature type="repeat" description="2">
    <location>
        <begin position="243"/>
        <end position="324"/>
    </location>
</feature>
<feature type="zinc finger region" description="TFIIB-type" evidence="2">
    <location>
        <begin position="33"/>
        <end position="64"/>
    </location>
</feature>
<feature type="binding site" evidence="2">
    <location>
        <position position="37"/>
    </location>
    <ligand>
        <name>Zn(2+)</name>
        <dbReference type="ChEBI" id="CHEBI:29105"/>
    </ligand>
</feature>
<feature type="binding site" evidence="2">
    <location>
        <position position="40"/>
    </location>
    <ligand>
        <name>Zn(2+)</name>
        <dbReference type="ChEBI" id="CHEBI:29105"/>
    </ligand>
</feature>
<feature type="binding site" evidence="2">
    <location>
        <position position="56"/>
    </location>
    <ligand>
        <name>Zn(2+)</name>
        <dbReference type="ChEBI" id="CHEBI:29105"/>
    </ligand>
</feature>
<feature type="binding site" evidence="2">
    <location>
        <position position="59"/>
    </location>
    <ligand>
        <name>Zn(2+)</name>
        <dbReference type="ChEBI" id="CHEBI:29105"/>
    </ligand>
</feature>
<protein>
    <recommendedName>
        <fullName evidence="1">Transcription initiation factor IIB</fullName>
        <shortName evidence="1">TFIIB</shortName>
    </recommendedName>
</protein>
<proteinExistence type="inferred from homology"/>
<name>TF2B_PYRAE</name>
<evidence type="ECO:0000255" key="1">
    <source>
        <dbReference type="HAMAP-Rule" id="MF_00383"/>
    </source>
</evidence>
<evidence type="ECO:0000255" key="2">
    <source>
        <dbReference type="PROSITE-ProRule" id="PRU00469"/>
    </source>
</evidence>
<accession>Q8ZWS3</accession>
<reference key="1">
    <citation type="journal article" date="2002" name="Proc. Natl. Acad. Sci. U.S.A.">
        <title>Genome sequence of the hyperthermophilic crenarchaeon Pyrobaculum aerophilum.</title>
        <authorList>
            <person name="Fitz-Gibbon S.T."/>
            <person name="Ladner H."/>
            <person name="Kim U.-J."/>
            <person name="Stetter K.O."/>
            <person name="Simon M.I."/>
            <person name="Miller J.H."/>
        </authorList>
    </citation>
    <scope>NUCLEOTIDE SEQUENCE [LARGE SCALE GENOMIC DNA]</scope>
    <source>
        <strain>ATCC 51768 / DSM 7523 / JCM 9630 / CIP 104966 / NBRC 100827 / IM2</strain>
    </source>
</reference>
<sequence length="333" mass="37342">MSVSNPPSSGKPLKLRVNKDSEGYLSLVTESGEVYKCPICGNDKFVYNYERGEAVCIVCGAVVQEQLLDLGPEWRAFTSEEKGQRARTGAPLTRLISEALTTVIDWRDKDVSGKELDIKRKLEVIRLRKWQTRARVQTSYERNFIQAAQELERLRSAMGIPRPCIEQALEIYRQALEKELVRGRSVEAMAAAALYMACRMMKMPRPLDELVRYTKASRREVARCYRLLLRELNVKVPISDPILYISRIAEQLKLSGEVVKTAIDILQKAKKAGITAGKDPAGLAAAAVYIASLMHGDNRTQKDFAVAAGVTEVTVRNRYKELAKALNIKVPVK</sequence>
<keyword id="KW-0479">Metal-binding</keyword>
<keyword id="KW-1185">Reference proteome</keyword>
<keyword id="KW-0677">Repeat</keyword>
<keyword id="KW-0804">Transcription</keyword>
<keyword id="KW-0805">Transcription regulation</keyword>
<keyword id="KW-0862">Zinc</keyword>
<keyword id="KW-0863">Zinc-finger</keyword>
<gene>
    <name evidence="1" type="primary">tfb</name>
    <name type="ordered locus">PAE1645</name>
</gene>
<organism>
    <name type="scientific">Pyrobaculum aerophilum (strain ATCC 51768 / DSM 7523 / JCM 9630 / CIP 104966 / NBRC 100827 / IM2)</name>
    <dbReference type="NCBI Taxonomy" id="178306"/>
    <lineage>
        <taxon>Archaea</taxon>
        <taxon>Thermoproteota</taxon>
        <taxon>Thermoprotei</taxon>
        <taxon>Thermoproteales</taxon>
        <taxon>Thermoproteaceae</taxon>
        <taxon>Pyrobaculum</taxon>
    </lineage>
</organism>
<dbReference type="EMBL" id="AE009441">
    <property type="protein sequence ID" value="AAL63626.1"/>
    <property type="molecule type" value="Genomic_DNA"/>
</dbReference>
<dbReference type="RefSeq" id="WP_011008099.1">
    <property type="nucleotide sequence ID" value="NC_003364.1"/>
</dbReference>
<dbReference type="SMR" id="Q8ZWS3"/>
<dbReference type="FunCoup" id="Q8ZWS3">
    <property type="interactions" value="132"/>
</dbReference>
<dbReference type="STRING" id="178306.PAE1645"/>
<dbReference type="EnsemblBacteria" id="AAL63626">
    <property type="protein sequence ID" value="AAL63626"/>
    <property type="gene ID" value="PAE1645"/>
</dbReference>
<dbReference type="GeneID" id="1465875"/>
<dbReference type="KEGG" id="pai:PAE1645"/>
<dbReference type="PATRIC" id="fig|178306.9.peg.1216"/>
<dbReference type="eggNOG" id="arCOG01981">
    <property type="taxonomic scope" value="Archaea"/>
</dbReference>
<dbReference type="HOGENOM" id="CLU_043736_0_1_2"/>
<dbReference type="InParanoid" id="Q8ZWS3"/>
<dbReference type="Proteomes" id="UP000002439">
    <property type="component" value="Chromosome"/>
</dbReference>
<dbReference type="GO" id="GO:0097550">
    <property type="term" value="C:transcription preinitiation complex"/>
    <property type="evidence" value="ECO:0000318"/>
    <property type="project" value="GO_Central"/>
</dbReference>
<dbReference type="GO" id="GO:0003700">
    <property type="term" value="F:DNA-binding transcription factor activity"/>
    <property type="evidence" value="ECO:0007669"/>
    <property type="project" value="UniProtKB-UniRule"/>
</dbReference>
<dbReference type="GO" id="GO:0017025">
    <property type="term" value="F:TBP-class protein binding"/>
    <property type="evidence" value="ECO:0007669"/>
    <property type="project" value="InterPro"/>
</dbReference>
<dbReference type="GO" id="GO:0008270">
    <property type="term" value="F:zinc ion binding"/>
    <property type="evidence" value="ECO:0007669"/>
    <property type="project" value="UniProtKB-UniRule"/>
</dbReference>
<dbReference type="GO" id="GO:0006352">
    <property type="term" value="P:DNA-templated transcription initiation"/>
    <property type="evidence" value="ECO:0000318"/>
    <property type="project" value="GO_Central"/>
</dbReference>
<dbReference type="GO" id="GO:0070897">
    <property type="term" value="P:transcription preinitiation complex assembly"/>
    <property type="evidence" value="ECO:0007669"/>
    <property type="project" value="InterPro"/>
</dbReference>
<dbReference type="CDD" id="cd20549">
    <property type="entry name" value="CYCLIN_TFIIB_archaea_like_rpt1"/>
    <property type="match status" value="1"/>
</dbReference>
<dbReference type="CDD" id="cd20550">
    <property type="entry name" value="CYCLIN_TFIIB_archaea_like_rpt2"/>
    <property type="match status" value="1"/>
</dbReference>
<dbReference type="FunFam" id="1.10.472.10:FF:000023">
    <property type="entry name" value="Transcription initiation factor IIB"/>
    <property type="match status" value="1"/>
</dbReference>
<dbReference type="FunFam" id="1.10.472.170:FF:000001">
    <property type="entry name" value="Transcription initiation factor IIB"/>
    <property type="match status" value="1"/>
</dbReference>
<dbReference type="Gene3D" id="1.10.472.170">
    <property type="match status" value="1"/>
</dbReference>
<dbReference type="Gene3D" id="1.10.472.10">
    <property type="entry name" value="Cyclin-like"/>
    <property type="match status" value="1"/>
</dbReference>
<dbReference type="HAMAP" id="MF_00383">
    <property type="entry name" value="TF2B_arch"/>
    <property type="match status" value="1"/>
</dbReference>
<dbReference type="InterPro" id="IPR013763">
    <property type="entry name" value="Cyclin-like_dom"/>
</dbReference>
<dbReference type="InterPro" id="IPR036915">
    <property type="entry name" value="Cyclin-like_sf"/>
</dbReference>
<dbReference type="InterPro" id="IPR000812">
    <property type="entry name" value="TFIIB"/>
</dbReference>
<dbReference type="InterPro" id="IPR023484">
    <property type="entry name" value="TFIIB_arc"/>
</dbReference>
<dbReference type="InterPro" id="IPR023486">
    <property type="entry name" value="TFIIB_CS"/>
</dbReference>
<dbReference type="InterPro" id="IPR013150">
    <property type="entry name" value="TFIIB_cyclin"/>
</dbReference>
<dbReference type="InterPro" id="IPR013137">
    <property type="entry name" value="Znf_TFIIB"/>
</dbReference>
<dbReference type="NCBIfam" id="NF001658">
    <property type="entry name" value="PRK00423.1"/>
    <property type="match status" value="1"/>
</dbReference>
<dbReference type="PANTHER" id="PTHR11618:SF13">
    <property type="entry name" value="TRANSCRIPTION INITIATION FACTOR IIB"/>
    <property type="match status" value="1"/>
</dbReference>
<dbReference type="PANTHER" id="PTHR11618">
    <property type="entry name" value="TRANSCRIPTION INITIATION FACTOR IIB-RELATED"/>
    <property type="match status" value="1"/>
</dbReference>
<dbReference type="Pfam" id="PF00382">
    <property type="entry name" value="TFIIB"/>
    <property type="match status" value="2"/>
</dbReference>
<dbReference type="Pfam" id="PF08271">
    <property type="entry name" value="Zn_Ribbon_TF"/>
    <property type="match status" value="1"/>
</dbReference>
<dbReference type="PRINTS" id="PR00685">
    <property type="entry name" value="TIFACTORIIB"/>
</dbReference>
<dbReference type="SMART" id="SM00385">
    <property type="entry name" value="CYCLIN"/>
    <property type="match status" value="2"/>
</dbReference>
<dbReference type="SUPFAM" id="SSF47954">
    <property type="entry name" value="Cyclin-like"/>
    <property type="match status" value="2"/>
</dbReference>
<dbReference type="SUPFAM" id="SSF57783">
    <property type="entry name" value="Zinc beta-ribbon"/>
    <property type="match status" value="1"/>
</dbReference>
<dbReference type="PROSITE" id="PS00782">
    <property type="entry name" value="TFIIB"/>
    <property type="match status" value="2"/>
</dbReference>
<dbReference type="PROSITE" id="PS51134">
    <property type="entry name" value="ZF_TFIIB"/>
    <property type="match status" value="1"/>
</dbReference>
<comment type="function">
    <text evidence="1">Stabilizes TBP binding to an archaeal box-A promoter. Also responsible for recruiting RNA polymerase II to the pre-initiation complex (DNA-TBP-TFIIB).</text>
</comment>
<comment type="similarity">
    <text evidence="1">Belongs to the TFIIB family.</text>
</comment>